<sequence>MTYSRNIFIPLTRACRNRCGYCTFRSDTPEPPLLEPEDVMGEVRRALSLGCTEALFTFGEDAHEFPGVRDKLESLGFGDMTDYTYHLCELTLDAGLLPHTNMGVIGYRELRMLKEVNASMGLMLESASPRLMETEAHRESPGKNPRLRIKMIEDAGRLRIPFTTGLLIGIGETIEERAESLLELRRIQDRYGHIQEIIIQNFRSKPGIPMENQREPSLLEMVKMVAAAKIMFPDVSIQVPPNLNRETGEIFLLAGADDWGGVSPISRDYVNPEAPWPEIDELKRITESAGFALEERLPVYRKFISREFLSPRVMERIEELYPRFIETL</sequence>
<dbReference type="EC" id="4.3.1.32" evidence="1"/>
<dbReference type="EMBL" id="AE000666">
    <property type="protein sequence ID" value="AAB85687.1"/>
    <property type="status" value="ALT_INIT"/>
    <property type="molecule type" value="Genomic_DNA"/>
</dbReference>
<dbReference type="PIR" id="G69026">
    <property type="entry name" value="G69026"/>
</dbReference>
<dbReference type="RefSeq" id="WP_010876822.1">
    <property type="nucleotide sequence ID" value="NC_000916.1"/>
</dbReference>
<dbReference type="SMR" id="O27266"/>
<dbReference type="FunCoup" id="O27266">
    <property type="interactions" value="90"/>
</dbReference>
<dbReference type="STRING" id="187420.MTH_1198"/>
<dbReference type="PaxDb" id="187420-MTH_1198"/>
<dbReference type="EnsemblBacteria" id="AAB85687">
    <property type="protein sequence ID" value="AAB85687"/>
    <property type="gene ID" value="MTH_1198"/>
</dbReference>
<dbReference type="GeneID" id="77401726"/>
<dbReference type="KEGG" id="mth:MTH_1198"/>
<dbReference type="PATRIC" id="fig|187420.15.peg.1176"/>
<dbReference type="HOGENOM" id="CLU_054174_0_0_2"/>
<dbReference type="InParanoid" id="O27266"/>
<dbReference type="UniPathway" id="UPA00072"/>
<dbReference type="Proteomes" id="UP000005223">
    <property type="component" value="Chromosome"/>
</dbReference>
<dbReference type="GO" id="GO:0051539">
    <property type="term" value="F:4 iron, 4 sulfur cluster binding"/>
    <property type="evidence" value="ECO:0007669"/>
    <property type="project" value="UniProtKB-KW"/>
</dbReference>
<dbReference type="GO" id="GO:0044689">
    <property type="term" value="F:7,8-didemethyl-8-hydroxy-5-deazariboflavin synthase activity"/>
    <property type="evidence" value="ECO:0007669"/>
    <property type="project" value="UniProtKB-EC"/>
</dbReference>
<dbReference type="GO" id="GO:0005506">
    <property type="term" value="F:iron ion binding"/>
    <property type="evidence" value="ECO:0007669"/>
    <property type="project" value="UniProtKB-UniRule"/>
</dbReference>
<dbReference type="GO" id="GO:0016765">
    <property type="term" value="F:transferase activity, transferring alkyl or aryl (other than methyl) groups"/>
    <property type="evidence" value="ECO:0007669"/>
    <property type="project" value="InterPro"/>
</dbReference>
<dbReference type="GO" id="GO:0044272">
    <property type="term" value="P:sulfur compound biosynthetic process"/>
    <property type="evidence" value="ECO:0007669"/>
    <property type="project" value="UniProtKB-ARBA"/>
</dbReference>
<dbReference type="GO" id="GO:0042364">
    <property type="term" value="P:water-soluble vitamin biosynthetic process"/>
    <property type="evidence" value="ECO:0007669"/>
    <property type="project" value="UniProtKB-ARBA"/>
</dbReference>
<dbReference type="CDD" id="cd01335">
    <property type="entry name" value="Radical_SAM"/>
    <property type="match status" value="1"/>
</dbReference>
<dbReference type="Gene3D" id="3.20.20.70">
    <property type="entry name" value="Aldolase class I"/>
    <property type="match status" value="1"/>
</dbReference>
<dbReference type="HAMAP" id="MF_01611">
    <property type="entry name" value="FO_synth_sub1"/>
    <property type="match status" value="1"/>
</dbReference>
<dbReference type="InterPro" id="IPR013785">
    <property type="entry name" value="Aldolase_TIM"/>
</dbReference>
<dbReference type="InterPro" id="IPR010722">
    <property type="entry name" value="BATS_dom"/>
</dbReference>
<dbReference type="InterPro" id="IPR019939">
    <property type="entry name" value="CofG_family"/>
</dbReference>
<dbReference type="InterPro" id="IPR006638">
    <property type="entry name" value="Elp3/MiaA/NifB-like_rSAM"/>
</dbReference>
<dbReference type="InterPro" id="IPR034405">
    <property type="entry name" value="F420"/>
</dbReference>
<dbReference type="InterPro" id="IPR007197">
    <property type="entry name" value="rSAM"/>
</dbReference>
<dbReference type="NCBIfam" id="TIGR03550">
    <property type="entry name" value="F420_cofG"/>
    <property type="match status" value="1"/>
</dbReference>
<dbReference type="NCBIfam" id="NF004884">
    <property type="entry name" value="PRK06245.1"/>
    <property type="match status" value="1"/>
</dbReference>
<dbReference type="PANTHER" id="PTHR43076:SF15">
    <property type="entry name" value="7,8-DIDEMETHYL-8-HYDROXY-5-DEAZARIBOFLAVIN SYNTHASE"/>
    <property type="match status" value="1"/>
</dbReference>
<dbReference type="PANTHER" id="PTHR43076">
    <property type="entry name" value="FO SYNTHASE (COFH)"/>
    <property type="match status" value="1"/>
</dbReference>
<dbReference type="Pfam" id="PF04055">
    <property type="entry name" value="Radical_SAM"/>
    <property type="match status" value="1"/>
</dbReference>
<dbReference type="SFLD" id="SFLDF00294">
    <property type="entry name" value="7_8-didemethyl-8-hydroxy-5-dea"/>
    <property type="match status" value="1"/>
</dbReference>
<dbReference type="SFLD" id="SFLDG01388">
    <property type="entry name" value="7_8-didemethyl-8-hydroxy-5-dea"/>
    <property type="match status" value="1"/>
</dbReference>
<dbReference type="SMART" id="SM00876">
    <property type="entry name" value="BATS"/>
    <property type="match status" value="1"/>
</dbReference>
<dbReference type="SMART" id="SM00729">
    <property type="entry name" value="Elp3"/>
    <property type="match status" value="1"/>
</dbReference>
<dbReference type="SUPFAM" id="SSF102114">
    <property type="entry name" value="Radical SAM enzymes"/>
    <property type="match status" value="1"/>
</dbReference>
<dbReference type="PROSITE" id="PS51918">
    <property type="entry name" value="RADICAL_SAM"/>
    <property type="match status" value="1"/>
</dbReference>
<evidence type="ECO:0000255" key="1">
    <source>
        <dbReference type="HAMAP-Rule" id="MF_01611"/>
    </source>
</evidence>
<evidence type="ECO:0000255" key="2">
    <source>
        <dbReference type="PROSITE-ProRule" id="PRU01266"/>
    </source>
</evidence>
<evidence type="ECO:0000305" key="3"/>
<organism>
    <name type="scientific">Methanothermobacter thermautotrophicus (strain ATCC 29096 / DSM 1053 / JCM 10044 / NBRC 100330 / Delta H)</name>
    <name type="common">Methanobacterium thermoautotrophicum</name>
    <dbReference type="NCBI Taxonomy" id="187420"/>
    <lineage>
        <taxon>Archaea</taxon>
        <taxon>Methanobacteriati</taxon>
        <taxon>Methanobacteriota</taxon>
        <taxon>Methanomada group</taxon>
        <taxon>Methanobacteria</taxon>
        <taxon>Methanobacteriales</taxon>
        <taxon>Methanobacteriaceae</taxon>
        <taxon>Methanothermobacter</taxon>
    </lineage>
</organism>
<gene>
    <name evidence="1" type="primary">cofG</name>
    <name type="ordered locus">MTH_1198</name>
</gene>
<accession>O27266</accession>
<keyword id="KW-0004">4Fe-4S</keyword>
<keyword id="KW-0408">Iron</keyword>
<keyword id="KW-0411">Iron-sulfur</keyword>
<keyword id="KW-0456">Lyase</keyword>
<keyword id="KW-0479">Metal-binding</keyword>
<keyword id="KW-1185">Reference proteome</keyword>
<keyword id="KW-0949">S-adenosyl-L-methionine</keyword>
<feature type="chain" id="PRO_0000147768" description="7,8-didemethyl-8-hydroxy-5-deazariboflavin synthase">
    <location>
        <begin position="1"/>
        <end position="328"/>
    </location>
</feature>
<feature type="domain" description="Radical SAM core" evidence="2">
    <location>
        <begin position="1"/>
        <end position="242"/>
    </location>
</feature>
<feature type="binding site" evidence="1">
    <location>
        <position position="15"/>
    </location>
    <ligand>
        <name>[4Fe-4S] cluster</name>
        <dbReference type="ChEBI" id="CHEBI:49883"/>
        <note>4Fe-4S-S-AdoMet</note>
    </ligand>
</feature>
<feature type="binding site" evidence="1">
    <location>
        <position position="19"/>
    </location>
    <ligand>
        <name>[4Fe-4S] cluster</name>
        <dbReference type="ChEBI" id="CHEBI:49883"/>
        <note>4Fe-4S-S-AdoMet</note>
    </ligand>
</feature>
<feature type="binding site" evidence="1">
    <location>
        <position position="22"/>
    </location>
    <ligand>
        <name>[4Fe-4S] cluster</name>
        <dbReference type="ChEBI" id="CHEBI:49883"/>
        <note>4Fe-4S-S-AdoMet</note>
    </ligand>
</feature>
<proteinExistence type="inferred from homology"/>
<name>COFG_METTH</name>
<comment type="function">
    <text evidence="1">Catalyzes the radical-mediated synthesis of 7,8-didemethyl-8-hydroxy-5-deazariboflavin from 5-amino-5-(4-hydroxybenzyl)-6-(D-ribitylimino)-5,6-dihydrouracil.</text>
</comment>
<comment type="catalytic activity">
    <reaction evidence="1">
        <text>5-amino-5-(4-hydroxybenzyl)-6-(D-ribitylimino)-5,6-dihydrouracil + S-adenosyl-L-methionine = 7,8-didemethyl-8-hydroxy-5-deazariboflavin + 5'-deoxyadenosine + L-methionine + NH4(+) + H(+)</text>
        <dbReference type="Rhea" id="RHEA:55204"/>
        <dbReference type="ChEBI" id="CHEBI:15378"/>
        <dbReference type="ChEBI" id="CHEBI:17319"/>
        <dbReference type="ChEBI" id="CHEBI:28938"/>
        <dbReference type="ChEBI" id="CHEBI:57844"/>
        <dbReference type="ChEBI" id="CHEBI:59789"/>
        <dbReference type="ChEBI" id="CHEBI:59904"/>
        <dbReference type="ChEBI" id="CHEBI:85936"/>
        <dbReference type="EC" id="4.3.1.32"/>
    </reaction>
</comment>
<comment type="cofactor">
    <cofactor evidence="1">
        <name>[4Fe-4S] cluster</name>
        <dbReference type="ChEBI" id="CHEBI:49883"/>
    </cofactor>
    <text evidence="1">Binds 1 [4Fe-4S] cluster. The cluster is coordinated with 3 cysteines and an exchangeable S-adenosyl-L-methionine.</text>
</comment>
<comment type="pathway">
    <text evidence="1">Cofactor biosynthesis; coenzyme F0 biosynthesis.</text>
</comment>
<comment type="subunit">
    <text evidence="1">Consists of two subunits, CofG and CofH.</text>
</comment>
<comment type="similarity">
    <text evidence="1">Belongs to the radical SAM superfamily. CofG family.</text>
</comment>
<comment type="sequence caution" evidence="3">
    <conflict type="erroneous initiation">
        <sequence resource="EMBL-CDS" id="AAB85687"/>
    </conflict>
</comment>
<reference key="1">
    <citation type="journal article" date="1997" name="J. Bacteriol.">
        <title>Complete genome sequence of Methanobacterium thermoautotrophicum deltaH: functional analysis and comparative genomics.</title>
        <authorList>
            <person name="Smith D.R."/>
            <person name="Doucette-Stamm L.A."/>
            <person name="Deloughery C."/>
            <person name="Lee H.-M."/>
            <person name="Dubois J."/>
            <person name="Aldredge T."/>
            <person name="Bashirzadeh R."/>
            <person name="Blakely D."/>
            <person name="Cook R."/>
            <person name="Gilbert K."/>
            <person name="Harrison D."/>
            <person name="Hoang L."/>
            <person name="Keagle P."/>
            <person name="Lumm W."/>
            <person name="Pothier B."/>
            <person name="Qiu D."/>
            <person name="Spadafora R."/>
            <person name="Vicare R."/>
            <person name="Wang Y."/>
            <person name="Wierzbowski J."/>
            <person name="Gibson R."/>
            <person name="Jiwani N."/>
            <person name="Caruso A."/>
            <person name="Bush D."/>
            <person name="Safer H."/>
            <person name="Patwell D."/>
            <person name="Prabhakar S."/>
            <person name="McDougall S."/>
            <person name="Shimer G."/>
            <person name="Goyal A."/>
            <person name="Pietrovski S."/>
            <person name="Church G.M."/>
            <person name="Daniels C.J."/>
            <person name="Mao J.-I."/>
            <person name="Rice P."/>
            <person name="Noelling J."/>
            <person name="Reeve J.N."/>
        </authorList>
    </citation>
    <scope>NUCLEOTIDE SEQUENCE [LARGE SCALE GENOMIC DNA]</scope>
    <source>
        <strain>ATCC 29096 / DSM 1053 / JCM 10044 / NBRC 100330 / Delta H</strain>
    </source>
</reference>
<protein>
    <recommendedName>
        <fullName evidence="1">7,8-didemethyl-8-hydroxy-5-deazariboflavin synthase</fullName>
        <ecNumber evidence="1">4.3.1.32</ecNumber>
    </recommendedName>
    <alternativeName>
        <fullName evidence="1">FO synthase subunit 1</fullName>
    </alternativeName>
</protein>